<feature type="chain" id="PRO_0000381994" description="Probable 4-amino-4-deoxy-L-arabinose-phosphoundecaprenol flippase subunit ArnF">
    <location>
        <begin position="1"/>
        <end position="147"/>
    </location>
</feature>
<feature type="topological domain" description="Cytoplasmic" evidence="1">
    <location>
        <begin position="1"/>
        <end position="23"/>
    </location>
</feature>
<feature type="transmembrane region" description="Helical" evidence="1">
    <location>
        <begin position="24"/>
        <end position="44"/>
    </location>
</feature>
<feature type="topological domain" description="Periplasmic" evidence="1">
    <location>
        <begin position="45"/>
        <end position="62"/>
    </location>
</feature>
<feature type="transmembrane region" description="Helical" evidence="1">
    <location>
        <begin position="63"/>
        <end position="83"/>
    </location>
</feature>
<feature type="topological domain" description="Cytoplasmic" evidence="1">
    <location>
        <begin position="84"/>
        <end position="93"/>
    </location>
</feature>
<feature type="transmembrane region" description="Helical" evidence="1">
    <location>
        <begin position="94"/>
        <end position="114"/>
    </location>
</feature>
<feature type="topological domain" description="Periplasmic" evidence="1">
    <location>
        <begin position="115"/>
        <end position="121"/>
    </location>
</feature>
<feature type="transmembrane region" description="Helical" evidence="1">
    <location>
        <begin position="122"/>
        <end position="142"/>
    </location>
</feature>
<feature type="topological domain" description="Cytoplasmic" evidence="1">
    <location>
        <begin position="143"/>
        <end position="147"/>
    </location>
</feature>
<keyword id="KW-0997">Cell inner membrane</keyword>
<keyword id="KW-1003">Cell membrane</keyword>
<keyword id="KW-0441">Lipid A biosynthesis</keyword>
<keyword id="KW-0444">Lipid biosynthesis</keyword>
<keyword id="KW-0443">Lipid metabolism</keyword>
<keyword id="KW-0448">Lipopolysaccharide biosynthesis</keyword>
<keyword id="KW-0472">Membrane</keyword>
<keyword id="KW-1185">Reference proteome</keyword>
<keyword id="KW-0812">Transmembrane</keyword>
<keyword id="KW-1133">Transmembrane helix</keyword>
<keyword id="KW-0813">Transport</keyword>
<accession>A0KGY2</accession>
<comment type="function">
    <text evidence="1">Translocates 4-amino-4-deoxy-L-arabinose-phosphoundecaprenol (alpha-L-Ara4N-phosphoundecaprenol) from the cytoplasmic to the periplasmic side of the inner membrane.</text>
</comment>
<comment type="pathway">
    <text evidence="1">Bacterial outer membrane biogenesis; lipopolysaccharide biosynthesis.</text>
</comment>
<comment type="subunit">
    <text evidence="1">Heterodimer of ArnE and ArnF.</text>
</comment>
<comment type="subcellular location">
    <subcellularLocation>
        <location evidence="1">Cell inner membrane</location>
        <topology evidence="1">Multi-pass membrane protein</topology>
    </subcellularLocation>
</comment>
<comment type="similarity">
    <text evidence="1">Belongs to the ArnF family.</text>
</comment>
<evidence type="ECO:0000255" key="1">
    <source>
        <dbReference type="HAMAP-Rule" id="MF_00538"/>
    </source>
</evidence>
<gene>
    <name evidence="1" type="primary">arnF</name>
    <name type="ordered locus">AHA_0986</name>
</gene>
<organism>
    <name type="scientific">Aeromonas hydrophila subsp. hydrophila (strain ATCC 7966 / DSM 30187 / BCRC 13018 / CCUG 14551 / JCM 1027 / KCTC 2358 / NCIMB 9240 / NCTC 8049)</name>
    <dbReference type="NCBI Taxonomy" id="380703"/>
    <lineage>
        <taxon>Bacteria</taxon>
        <taxon>Pseudomonadati</taxon>
        <taxon>Pseudomonadota</taxon>
        <taxon>Gammaproteobacteria</taxon>
        <taxon>Aeromonadales</taxon>
        <taxon>Aeromonadaceae</taxon>
        <taxon>Aeromonas</taxon>
    </lineage>
</organism>
<reference key="1">
    <citation type="journal article" date="2006" name="J. Bacteriol.">
        <title>Genome sequence of Aeromonas hydrophila ATCC 7966T: jack of all trades.</title>
        <authorList>
            <person name="Seshadri R."/>
            <person name="Joseph S.W."/>
            <person name="Chopra A.K."/>
            <person name="Sha J."/>
            <person name="Shaw J."/>
            <person name="Graf J."/>
            <person name="Haft D.H."/>
            <person name="Wu M."/>
            <person name="Ren Q."/>
            <person name="Rosovitz M.J."/>
            <person name="Madupu R."/>
            <person name="Tallon L."/>
            <person name="Kim M."/>
            <person name="Jin S."/>
            <person name="Vuong H."/>
            <person name="Stine O.C."/>
            <person name="Ali A."/>
            <person name="Horneman A.J."/>
            <person name="Heidelberg J.F."/>
        </authorList>
    </citation>
    <scope>NUCLEOTIDE SEQUENCE [LARGE SCALE GENOMIC DNA]</scope>
    <source>
        <strain>ATCC 7966 / DSM 30187 / BCRC 13018 / CCUG 14551 / JCM 1027 / KCTC 2358 / NCIMB 9240 / NCTC 8049</strain>
    </source>
</reference>
<dbReference type="EMBL" id="CP000462">
    <property type="protein sequence ID" value="ABK36949.1"/>
    <property type="molecule type" value="Genomic_DNA"/>
</dbReference>
<dbReference type="RefSeq" id="WP_011704921.1">
    <property type="nucleotide sequence ID" value="NC_008570.1"/>
</dbReference>
<dbReference type="RefSeq" id="YP_855532.1">
    <property type="nucleotide sequence ID" value="NC_008570.1"/>
</dbReference>
<dbReference type="STRING" id="380703.AHA_0986"/>
<dbReference type="EnsemblBacteria" id="ABK36949">
    <property type="protein sequence ID" value="ABK36949"/>
    <property type="gene ID" value="AHA_0986"/>
</dbReference>
<dbReference type="GeneID" id="4487527"/>
<dbReference type="KEGG" id="aha:AHA_0986"/>
<dbReference type="PATRIC" id="fig|380703.7.peg.990"/>
<dbReference type="eggNOG" id="COG2076">
    <property type="taxonomic scope" value="Bacteria"/>
</dbReference>
<dbReference type="HOGENOM" id="CLU_131462_1_0_6"/>
<dbReference type="OrthoDB" id="5592809at2"/>
<dbReference type="UniPathway" id="UPA00030"/>
<dbReference type="Proteomes" id="UP000000756">
    <property type="component" value="Chromosome"/>
</dbReference>
<dbReference type="GO" id="GO:0005886">
    <property type="term" value="C:plasma membrane"/>
    <property type="evidence" value="ECO:0007669"/>
    <property type="project" value="UniProtKB-SubCell"/>
</dbReference>
<dbReference type="GO" id="GO:1901505">
    <property type="term" value="F:carbohydrate derivative transmembrane transporter activity"/>
    <property type="evidence" value="ECO:0007669"/>
    <property type="project" value="InterPro"/>
</dbReference>
<dbReference type="GO" id="GO:0009245">
    <property type="term" value="P:lipid A biosynthetic process"/>
    <property type="evidence" value="ECO:0007669"/>
    <property type="project" value="UniProtKB-UniRule"/>
</dbReference>
<dbReference type="GO" id="GO:0009103">
    <property type="term" value="P:lipopolysaccharide biosynthetic process"/>
    <property type="evidence" value="ECO:0007669"/>
    <property type="project" value="UniProtKB-UniRule"/>
</dbReference>
<dbReference type="Gene3D" id="1.10.3730.20">
    <property type="match status" value="1"/>
</dbReference>
<dbReference type="HAMAP" id="MF_00538">
    <property type="entry name" value="Flippase_ArnF"/>
    <property type="match status" value="1"/>
</dbReference>
<dbReference type="InterPro" id="IPR022832">
    <property type="entry name" value="Flippase_ArnF"/>
</dbReference>
<dbReference type="InterPro" id="IPR000390">
    <property type="entry name" value="Small_drug/metabolite_transptr"/>
</dbReference>
<dbReference type="NCBIfam" id="NF002816">
    <property type="entry name" value="PRK02971.1-2"/>
    <property type="match status" value="1"/>
</dbReference>
<dbReference type="PANTHER" id="PTHR30561:SF9">
    <property type="entry name" value="4-AMINO-4-DEOXY-L-ARABINOSE-PHOSPHOUNDECAPRENOL FLIPPASE SUBUNIT ARNF-RELATED"/>
    <property type="match status" value="1"/>
</dbReference>
<dbReference type="PANTHER" id="PTHR30561">
    <property type="entry name" value="SMR FAMILY PROTON-DEPENDENT DRUG EFFLUX TRANSPORTER SUGE"/>
    <property type="match status" value="1"/>
</dbReference>
<dbReference type="SUPFAM" id="SSF103481">
    <property type="entry name" value="Multidrug resistance efflux transporter EmrE"/>
    <property type="match status" value="1"/>
</dbReference>
<proteinExistence type="inferred from homology"/>
<sequence>MSNDHPQGQLPASPARSALKGYLYVLGSILLVTAAQLGMKWGVIQLPTWQMDLAVMLAHPLPLLVILAGVGCYALSLLCWLAALHSTPLNIAYPLLSTSYALVYLLAVNIPLFAEPLEPGKALGVLFILLGAVLVGIKPAAGTKQTG</sequence>
<name>ARNF_AERHH</name>
<protein>
    <recommendedName>
        <fullName evidence="1">Probable 4-amino-4-deoxy-L-arabinose-phosphoundecaprenol flippase subunit ArnF</fullName>
        <shortName evidence="1">L-Ara4N-phosphoundecaprenol flippase subunit ArnF</shortName>
    </recommendedName>
    <alternativeName>
        <fullName evidence="1">Undecaprenyl phosphate-aminoarabinose flippase subunit ArnF</fullName>
    </alternativeName>
</protein>